<feature type="chain" id="PRO_1000023437" description="Translational regulator CsrA">
    <location>
        <begin position="1"/>
        <end position="65"/>
    </location>
</feature>
<gene>
    <name evidence="1" type="primary">csrA</name>
    <name type="ordered locus">VIBHAR_03509</name>
</gene>
<dbReference type="EMBL" id="CP000789">
    <property type="protein sequence ID" value="ABU72445.1"/>
    <property type="molecule type" value="Genomic_DNA"/>
</dbReference>
<dbReference type="RefSeq" id="WP_004415691.1">
    <property type="nucleotide sequence ID" value="NC_022269.1"/>
</dbReference>
<dbReference type="SMR" id="A7MYT3"/>
<dbReference type="GeneID" id="97173036"/>
<dbReference type="KEGG" id="vha:VIBHAR_03509"/>
<dbReference type="PATRIC" id="fig|338187.25.peg.2701"/>
<dbReference type="Proteomes" id="UP000008152">
    <property type="component" value="Chromosome I"/>
</dbReference>
<dbReference type="GO" id="GO:0005829">
    <property type="term" value="C:cytosol"/>
    <property type="evidence" value="ECO:0007669"/>
    <property type="project" value="TreeGrafter"/>
</dbReference>
<dbReference type="GO" id="GO:0048027">
    <property type="term" value="F:mRNA 5'-UTR binding"/>
    <property type="evidence" value="ECO:0007669"/>
    <property type="project" value="UniProtKB-UniRule"/>
</dbReference>
<dbReference type="GO" id="GO:0006402">
    <property type="term" value="P:mRNA catabolic process"/>
    <property type="evidence" value="ECO:0007669"/>
    <property type="project" value="InterPro"/>
</dbReference>
<dbReference type="GO" id="GO:0045947">
    <property type="term" value="P:negative regulation of translational initiation"/>
    <property type="evidence" value="ECO:0007669"/>
    <property type="project" value="UniProtKB-UniRule"/>
</dbReference>
<dbReference type="GO" id="GO:0045948">
    <property type="term" value="P:positive regulation of translational initiation"/>
    <property type="evidence" value="ECO:0007669"/>
    <property type="project" value="UniProtKB-UniRule"/>
</dbReference>
<dbReference type="GO" id="GO:0006109">
    <property type="term" value="P:regulation of carbohydrate metabolic process"/>
    <property type="evidence" value="ECO:0007669"/>
    <property type="project" value="UniProtKB-UniRule"/>
</dbReference>
<dbReference type="FunFam" id="2.60.40.4380:FF:000001">
    <property type="entry name" value="Translational regulator CsrA"/>
    <property type="match status" value="1"/>
</dbReference>
<dbReference type="Gene3D" id="2.60.40.4380">
    <property type="entry name" value="Translational regulator CsrA"/>
    <property type="match status" value="1"/>
</dbReference>
<dbReference type="HAMAP" id="MF_00167">
    <property type="entry name" value="CsrA"/>
    <property type="match status" value="1"/>
</dbReference>
<dbReference type="InterPro" id="IPR003751">
    <property type="entry name" value="CsrA"/>
</dbReference>
<dbReference type="InterPro" id="IPR036107">
    <property type="entry name" value="CsrA_sf"/>
</dbReference>
<dbReference type="NCBIfam" id="TIGR00202">
    <property type="entry name" value="csrA"/>
    <property type="match status" value="1"/>
</dbReference>
<dbReference type="NCBIfam" id="NF002469">
    <property type="entry name" value="PRK01712.1"/>
    <property type="match status" value="1"/>
</dbReference>
<dbReference type="PANTHER" id="PTHR34984">
    <property type="entry name" value="CARBON STORAGE REGULATOR"/>
    <property type="match status" value="1"/>
</dbReference>
<dbReference type="PANTHER" id="PTHR34984:SF1">
    <property type="entry name" value="CARBON STORAGE REGULATOR"/>
    <property type="match status" value="1"/>
</dbReference>
<dbReference type="Pfam" id="PF02599">
    <property type="entry name" value="CsrA"/>
    <property type="match status" value="1"/>
</dbReference>
<dbReference type="SUPFAM" id="SSF117130">
    <property type="entry name" value="CsrA-like"/>
    <property type="match status" value="1"/>
</dbReference>
<evidence type="ECO:0000255" key="1">
    <source>
        <dbReference type="HAMAP-Rule" id="MF_00167"/>
    </source>
</evidence>
<reference key="1">
    <citation type="submission" date="2007-08" db="EMBL/GenBank/DDBJ databases">
        <authorList>
            <consortium name="The Vibrio harveyi Genome Sequencing Project"/>
            <person name="Bassler B."/>
            <person name="Clifton S.W."/>
            <person name="Fulton L."/>
            <person name="Delehaunty K."/>
            <person name="Fronick C."/>
            <person name="Harrison M."/>
            <person name="Markivic C."/>
            <person name="Fulton R."/>
            <person name="Tin-Wollam A.-M."/>
            <person name="Shah N."/>
            <person name="Pepin K."/>
            <person name="Nash W."/>
            <person name="Thiruvilangam P."/>
            <person name="Bhonagiri V."/>
            <person name="Waters C."/>
            <person name="Tu K.C."/>
            <person name="Irgon J."/>
            <person name="Wilson R.K."/>
        </authorList>
    </citation>
    <scope>NUCLEOTIDE SEQUENCE [LARGE SCALE GENOMIC DNA]</scope>
    <source>
        <strain>ATCC BAA-1116 / BB120</strain>
    </source>
</reference>
<comment type="function">
    <text evidence="1">A key translational regulator that binds mRNA to regulate translation initiation and/or mRNA stability. Mediates global changes in gene expression, shifting from rapid growth to stress survival by linking envelope stress, the stringent response and the catabolite repression systems. Usually binds in the 5'-UTR; binding at or near the Shine-Dalgarno sequence prevents ribosome-binding, repressing translation, binding elsewhere in the 5'-UTR can activate translation and/or stabilize the mRNA. Its function is antagonized by small RNA(s).</text>
</comment>
<comment type="subunit">
    <text evidence="1">Homodimer; the beta-strands of each monomer intercalate to form a hydrophobic core, while the alpha-helices form wings that extend away from the core.</text>
</comment>
<comment type="subcellular location">
    <subcellularLocation>
        <location evidence="1">Cytoplasm</location>
    </subcellularLocation>
</comment>
<comment type="similarity">
    <text evidence="1">Belongs to the CsrA/RsmA family.</text>
</comment>
<organism>
    <name type="scientific">Vibrio campbellii (strain ATCC BAA-1116)</name>
    <dbReference type="NCBI Taxonomy" id="2902295"/>
    <lineage>
        <taxon>Bacteria</taxon>
        <taxon>Pseudomonadati</taxon>
        <taxon>Pseudomonadota</taxon>
        <taxon>Gammaproteobacteria</taxon>
        <taxon>Vibrionales</taxon>
        <taxon>Vibrionaceae</taxon>
        <taxon>Vibrio</taxon>
    </lineage>
</organism>
<name>CSRA_VIBC1</name>
<sequence>MLILTRRVGETLMIGDEVTVTVLGVKGNQVRIGVNAPKEVSVHREEIYMRIQAEKGNGNVASGNY</sequence>
<keyword id="KW-0010">Activator</keyword>
<keyword id="KW-0963">Cytoplasm</keyword>
<keyword id="KW-0678">Repressor</keyword>
<keyword id="KW-0694">RNA-binding</keyword>
<keyword id="KW-0810">Translation regulation</keyword>
<proteinExistence type="inferred from homology"/>
<protein>
    <recommendedName>
        <fullName evidence="1">Translational regulator CsrA</fullName>
    </recommendedName>
    <alternativeName>
        <fullName evidence="1">Carbon storage regulator</fullName>
    </alternativeName>
</protein>
<accession>A7MYT3</accession>